<feature type="chain" id="PRO_1000194952" description="Ribosome-recycling factor">
    <location>
        <begin position="1"/>
        <end position="184"/>
    </location>
</feature>
<gene>
    <name evidence="1" type="primary">frr</name>
    <name type="ordered locus">Sca_0894</name>
</gene>
<proteinExistence type="inferred from homology"/>
<keyword id="KW-0963">Cytoplasm</keyword>
<keyword id="KW-0648">Protein biosynthesis</keyword>
<keyword id="KW-1185">Reference proteome</keyword>
<sequence>MSDILSETRSRMKKSIESLSRELATINAGRANSNLLAGVKVDYYGAPTPVQQLASINVPEPRLLVVSPYDKTSLSDIERAINAANLGVNPSSDGEVIRIMVPALTEERRKELVKDVKKMGENAKVSIRNIRRDSNDDLKKDEKEGVISEDELRTGTDDVQKITDESIKEVDKVLEEKEKDIMSV</sequence>
<accession>B9DPH1</accession>
<comment type="function">
    <text evidence="1">Responsible for the release of ribosomes from messenger RNA at the termination of protein biosynthesis. May increase the efficiency of translation by recycling ribosomes from one round of translation to another.</text>
</comment>
<comment type="subcellular location">
    <subcellularLocation>
        <location evidence="1">Cytoplasm</location>
    </subcellularLocation>
</comment>
<comment type="similarity">
    <text evidence="1">Belongs to the RRF family.</text>
</comment>
<evidence type="ECO:0000255" key="1">
    <source>
        <dbReference type="HAMAP-Rule" id="MF_00040"/>
    </source>
</evidence>
<name>RRF_STACT</name>
<organism>
    <name type="scientific">Staphylococcus carnosus (strain TM300)</name>
    <dbReference type="NCBI Taxonomy" id="396513"/>
    <lineage>
        <taxon>Bacteria</taxon>
        <taxon>Bacillati</taxon>
        <taxon>Bacillota</taxon>
        <taxon>Bacilli</taxon>
        <taxon>Bacillales</taxon>
        <taxon>Staphylococcaceae</taxon>
        <taxon>Staphylococcus</taxon>
    </lineage>
</organism>
<protein>
    <recommendedName>
        <fullName evidence="1">Ribosome-recycling factor</fullName>
        <shortName evidence="1">RRF</shortName>
    </recommendedName>
    <alternativeName>
        <fullName evidence="1">Ribosome-releasing factor</fullName>
    </alternativeName>
</protein>
<dbReference type="EMBL" id="AM295250">
    <property type="protein sequence ID" value="CAL27803.1"/>
    <property type="molecule type" value="Genomic_DNA"/>
</dbReference>
<dbReference type="RefSeq" id="WP_015900144.1">
    <property type="nucleotide sequence ID" value="NC_012121.1"/>
</dbReference>
<dbReference type="SMR" id="B9DPH1"/>
<dbReference type="GeneID" id="93793324"/>
<dbReference type="KEGG" id="sca:SCA_0894"/>
<dbReference type="eggNOG" id="COG0233">
    <property type="taxonomic scope" value="Bacteria"/>
</dbReference>
<dbReference type="HOGENOM" id="CLU_073981_2_0_9"/>
<dbReference type="OrthoDB" id="9804006at2"/>
<dbReference type="BioCyc" id="SCAR396513:SCA_RS04510-MONOMER"/>
<dbReference type="Proteomes" id="UP000000444">
    <property type="component" value="Chromosome"/>
</dbReference>
<dbReference type="GO" id="GO:0005737">
    <property type="term" value="C:cytoplasm"/>
    <property type="evidence" value="ECO:0007669"/>
    <property type="project" value="UniProtKB-SubCell"/>
</dbReference>
<dbReference type="GO" id="GO:0043023">
    <property type="term" value="F:ribosomal large subunit binding"/>
    <property type="evidence" value="ECO:0007669"/>
    <property type="project" value="TreeGrafter"/>
</dbReference>
<dbReference type="GO" id="GO:0006415">
    <property type="term" value="P:translational termination"/>
    <property type="evidence" value="ECO:0007669"/>
    <property type="project" value="UniProtKB-UniRule"/>
</dbReference>
<dbReference type="CDD" id="cd00520">
    <property type="entry name" value="RRF"/>
    <property type="match status" value="1"/>
</dbReference>
<dbReference type="FunFam" id="1.10.132.20:FF:000001">
    <property type="entry name" value="Ribosome-recycling factor"/>
    <property type="match status" value="1"/>
</dbReference>
<dbReference type="FunFam" id="3.30.1360.40:FF:000001">
    <property type="entry name" value="Ribosome-recycling factor"/>
    <property type="match status" value="1"/>
</dbReference>
<dbReference type="Gene3D" id="3.30.1360.40">
    <property type="match status" value="1"/>
</dbReference>
<dbReference type="Gene3D" id="1.10.132.20">
    <property type="entry name" value="Ribosome-recycling factor"/>
    <property type="match status" value="1"/>
</dbReference>
<dbReference type="HAMAP" id="MF_00040">
    <property type="entry name" value="RRF"/>
    <property type="match status" value="1"/>
</dbReference>
<dbReference type="InterPro" id="IPR002661">
    <property type="entry name" value="Ribosome_recyc_fac"/>
</dbReference>
<dbReference type="InterPro" id="IPR023584">
    <property type="entry name" value="Ribosome_recyc_fac_dom"/>
</dbReference>
<dbReference type="InterPro" id="IPR036191">
    <property type="entry name" value="RRF_sf"/>
</dbReference>
<dbReference type="NCBIfam" id="TIGR00496">
    <property type="entry name" value="frr"/>
    <property type="match status" value="1"/>
</dbReference>
<dbReference type="PANTHER" id="PTHR20982:SF3">
    <property type="entry name" value="MITOCHONDRIAL RIBOSOME RECYCLING FACTOR PSEUDO 1"/>
    <property type="match status" value="1"/>
</dbReference>
<dbReference type="PANTHER" id="PTHR20982">
    <property type="entry name" value="RIBOSOME RECYCLING FACTOR"/>
    <property type="match status" value="1"/>
</dbReference>
<dbReference type="Pfam" id="PF01765">
    <property type="entry name" value="RRF"/>
    <property type="match status" value="1"/>
</dbReference>
<dbReference type="SUPFAM" id="SSF55194">
    <property type="entry name" value="Ribosome recycling factor, RRF"/>
    <property type="match status" value="1"/>
</dbReference>
<reference key="1">
    <citation type="journal article" date="2009" name="Appl. Environ. Microbiol.">
        <title>Genome analysis of the meat starter culture bacterium Staphylococcus carnosus TM300.</title>
        <authorList>
            <person name="Rosenstein R."/>
            <person name="Nerz C."/>
            <person name="Biswas L."/>
            <person name="Resch A."/>
            <person name="Raddatz G."/>
            <person name="Schuster S.C."/>
            <person name="Goetz F."/>
        </authorList>
    </citation>
    <scope>NUCLEOTIDE SEQUENCE [LARGE SCALE GENOMIC DNA]</scope>
    <source>
        <strain>TM300</strain>
    </source>
</reference>